<comment type="function">
    <text evidence="1">The heterodimer acts as both an ATP-dependent DNA helicase and an ATP-dependent, dual-direction single-stranded exonuclease. Recognizes the chi site generating a DNA molecule suitable for the initiation of homologous recombination. The AddA nuclease domain is required for chi fragment generation; this subunit has the helicase and 3' -&gt; 5' nuclease activities.</text>
</comment>
<comment type="catalytic activity">
    <reaction evidence="1">
        <text>Couples ATP hydrolysis with the unwinding of duplex DNA by translocating in the 3'-5' direction.</text>
        <dbReference type="EC" id="5.6.2.4"/>
    </reaction>
</comment>
<comment type="catalytic activity">
    <reaction evidence="1">
        <text>ATP + H2O = ADP + phosphate + H(+)</text>
        <dbReference type="Rhea" id="RHEA:13065"/>
        <dbReference type="ChEBI" id="CHEBI:15377"/>
        <dbReference type="ChEBI" id="CHEBI:15378"/>
        <dbReference type="ChEBI" id="CHEBI:30616"/>
        <dbReference type="ChEBI" id="CHEBI:43474"/>
        <dbReference type="ChEBI" id="CHEBI:456216"/>
        <dbReference type="EC" id="5.6.2.4"/>
    </reaction>
</comment>
<comment type="cofactor">
    <cofactor evidence="1">
        <name>Mg(2+)</name>
        <dbReference type="ChEBI" id="CHEBI:18420"/>
    </cofactor>
</comment>
<comment type="subunit">
    <text evidence="1">Heterodimer of AddA and AddB/RexB.</text>
</comment>
<comment type="similarity">
    <text evidence="1">Belongs to the helicase family. AddA subfamily.</text>
</comment>
<keyword id="KW-0067">ATP-binding</keyword>
<keyword id="KW-0227">DNA damage</keyword>
<keyword id="KW-0234">DNA repair</keyword>
<keyword id="KW-0238">DNA-binding</keyword>
<keyword id="KW-0269">Exonuclease</keyword>
<keyword id="KW-0347">Helicase</keyword>
<keyword id="KW-0378">Hydrolase</keyword>
<keyword id="KW-0413">Isomerase</keyword>
<keyword id="KW-0540">Nuclease</keyword>
<keyword id="KW-0547">Nucleotide-binding</keyword>
<keyword id="KW-1185">Reference proteome</keyword>
<feature type="chain" id="PRO_0000379351" description="ATP-dependent helicase/nuclease subunit A">
    <location>
        <begin position="1"/>
        <end position="1224"/>
    </location>
</feature>
<feature type="domain" description="UvrD-like helicase ATP-binding" evidence="1">
    <location>
        <begin position="26"/>
        <end position="491"/>
    </location>
</feature>
<feature type="domain" description="UvrD-like helicase C-terminal" evidence="1">
    <location>
        <begin position="519"/>
        <end position="809"/>
    </location>
</feature>
<feature type="binding site" evidence="1">
    <location>
        <begin position="47"/>
        <end position="54"/>
    </location>
    <ligand>
        <name>ATP</name>
        <dbReference type="ChEBI" id="CHEBI:30616"/>
    </ligand>
</feature>
<name>ADDA_STRSV</name>
<proteinExistence type="inferred from homology"/>
<dbReference type="EC" id="3.1.-.-" evidence="1"/>
<dbReference type="EC" id="5.6.2.4" evidence="1"/>
<dbReference type="EMBL" id="CP000387">
    <property type="protein sequence ID" value="ABN44844.1"/>
    <property type="molecule type" value="Genomic_DNA"/>
</dbReference>
<dbReference type="RefSeq" id="WP_011837144.1">
    <property type="nucleotide sequence ID" value="NC_009009.1"/>
</dbReference>
<dbReference type="RefSeq" id="YP_001035394.1">
    <property type="nucleotide sequence ID" value="NC_009009.1"/>
</dbReference>
<dbReference type="SMR" id="A3CNT9"/>
<dbReference type="STRING" id="388919.SSA_1451"/>
<dbReference type="KEGG" id="ssa:SSA_1451"/>
<dbReference type="PATRIC" id="fig|388919.9.peg.1376"/>
<dbReference type="eggNOG" id="COG1074">
    <property type="taxonomic scope" value="Bacteria"/>
</dbReference>
<dbReference type="HOGENOM" id="CLU_001114_3_1_9"/>
<dbReference type="OrthoDB" id="9810135at2"/>
<dbReference type="Proteomes" id="UP000002148">
    <property type="component" value="Chromosome"/>
</dbReference>
<dbReference type="GO" id="GO:0005829">
    <property type="term" value="C:cytosol"/>
    <property type="evidence" value="ECO:0007669"/>
    <property type="project" value="TreeGrafter"/>
</dbReference>
<dbReference type="GO" id="GO:0033202">
    <property type="term" value="C:DNA helicase complex"/>
    <property type="evidence" value="ECO:0007669"/>
    <property type="project" value="TreeGrafter"/>
</dbReference>
<dbReference type="GO" id="GO:0043138">
    <property type="term" value="F:3'-5' DNA helicase activity"/>
    <property type="evidence" value="ECO:0007669"/>
    <property type="project" value="UniProtKB-UniRule"/>
</dbReference>
<dbReference type="GO" id="GO:0008408">
    <property type="term" value="F:3'-5' exonuclease activity"/>
    <property type="evidence" value="ECO:0007669"/>
    <property type="project" value="UniProtKB-UniRule"/>
</dbReference>
<dbReference type="GO" id="GO:0005524">
    <property type="term" value="F:ATP binding"/>
    <property type="evidence" value="ECO:0007669"/>
    <property type="project" value="UniProtKB-UniRule"/>
</dbReference>
<dbReference type="GO" id="GO:0016887">
    <property type="term" value="F:ATP hydrolysis activity"/>
    <property type="evidence" value="ECO:0007669"/>
    <property type="project" value="RHEA"/>
</dbReference>
<dbReference type="GO" id="GO:0003690">
    <property type="term" value="F:double-stranded DNA binding"/>
    <property type="evidence" value="ECO:0007669"/>
    <property type="project" value="UniProtKB-UniRule"/>
</dbReference>
<dbReference type="GO" id="GO:0000724">
    <property type="term" value="P:double-strand break repair via homologous recombination"/>
    <property type="evidence" value="ECO:0007669"/>
    <property type="project" value="UniProtKB-UniRule"/>
</dbReference>
<dbReference type="CDD" id="cd17932">
    <property type="entry name" value="DEXQc_UvrD"/>
    <property type="match status" value="1"/>
</dbReference>
<dbReference type="Gene3D" id="3.90.320.10">
    <property type="match status" value="1"/>
</dbReference>
<dbReference type="Gene3D" id="3.40.50.300">
    <property type="entry name" value="P-loop containing nucleotide triphosphate hydrolases"/>
    <property type="match status" value="4"/>
</dbReference>
<dbReference type="Gene3D" id="1.10.486.10">
    <property type="entry name" value="PCRA, domain 4"/>
    <property type="match status" value="1"/>
</dbReference>
<dbReference type="HAMAP" id="MF_01451">
    <property type="entry name" value="AddA"/>
    <property type="match status" value="1"/>
</dbReference>
<dbReference type="InterPro" id="IPR014152">
    <property type="entry name" value="AddA"/>
</dbReference>
<dbReference type="InterPro" id="IPR014017">
    <property type="entry name" value="DNA_helicase_UvrD-like_C"/>
</dbReference>
<dbReference type="InterPro" id="IPR000212">
    <property type="entry name" value="DNA_helicase_UvrD/REP"/>
</dbReference>
<dbReference type="InterPro" id="IPR027417">
    <property type="entry name" value="P-loop_NTPase"/>
</dbReference>
<dbReference type="InterPro" id="IPR011604">
    <property type="entry name" value="PDDEXK-like_dom_sf"/>
</dbReference>
<dbReference type="InterPro" id="IPR038726">
    <property type="entry name" value="PDDEXK_AddAB-type"/>
</dbReference>
<dbReference type="InterPro" id="IPR011335">
    <property type="entry name" value="Restrct_endonuc-II-like"/>
</dbReference>
<dbReference type="InterPro" id="IPR014016">
    <property type="entry name" value="UvrD-like_ATP-bd"/>
</dbReference>
<dbReference type="NCBIfam" id="TIGR02785">
    <property type="entry name" value="addA_Gpos"/>
    <property type="match status" value="1"/>
</dbReference>
<dbReference type="PANTHER" id="PTHR11070:SF48">
    <property type="entry name" value="ATP-DEPENDENT HELICASE_NUCLEASE SUBUNIT A"/>
    <property type="match status" value="1"/>
</dbReference>
<dbReference type="PANTHER" id="PTHR11070">
    <property type="entry name" value="UVRD / RECB / PCRA DNA HELICASE FAMILY MEMBER"/>
    <property type="match status" value="1"/>
</dbReference>
<dbReference type="Pfam" id="PF12705">
    <property type="entry name" value="PDDEXK_1"/>
    <property type="match status" value="1"/>
</dbReference>
<dbReference type="Pfam" id="PF00580">
    <property type="entry name" value="UvrD-helicase"/>
    <property type="match status" value="1"/>
</dbReference>
<dbReference type="Pfam" id="PF13361">
    <property type="entry name" value="UvrD_C"/>
    <property type="match status" value="1"/>
</dbReference>
<dbReference type="SUPFAM" id="SSF52540">
    <property type="entry name" value="P-loop containing nucleoside triphosphate hydrolases"/>
    <property type="match status" value="1"/>
</dbReference>
<dbReference type="SUPFAM" id="SSF52980">
    <property type="entry name" value="Restriction endonuclease-like"/>
    <property type="match status" value="1"/>
</dbReference>
<dbReference type="PROSITE" id="PS51198">
    <property type="entry name" value="UVRD_HELICASE_ATP_BIND"/>
    <property type="match status" value="1"/>
</dbReference>
<dbReference type="PROSITE" id="PS51217">
    <property type="entry name" value="UVRD_HELICASE_CTER"/>
    <property type="match status" value="1"/>
</dbReference>
<evidence type="ECO:0000255" key="1">
    <source>
        <dbReference type="HAMAP-Rule" id="MF_01451"/>
    </source>
</evidence>
<gene>
    <name evidence="1" type="primary">addA</name>
    <name type="synonym">rexA</name>
    <name type="ordered locus">SSA_1451</name>
</gene>
<protein>
    <recommendedName>
        <fullName evidence="1">ATP-dependent helicase/nuclease subunit A</fullName>
        <ecNumber evidence="1">3.1.-.-</ecNumber>
        <ecNumber evidence="1">5.6.2.4</ecNumber>
    </recommendedName>
    <alternativeName>
        <fullName evidence="1">ATP-dependent helicase/nuclease AddA</fullName>
    </alternativeName>
    <alternativeName>
        <fullName evidence="1">DNA 3'-5' helicase AddA</fullName>
    </alternativeName>
</protein>
<organism>
    <name type="scientific">Streptococcus sanguinis (strain SK36)</name>
    <dbReference type="NCBI Taxonomy" id="388919"/>
    <lineage>
        <taxon>Bacteria</taxon>
        <taxon>Bacillati</taxon>
        <taxon>Bacillota</taxon>
        <taxon>Bacilli</taxon>
        <taxon>Lactobacillales</taxon>
        <taxon>Streptococcaceae</taxon>
        <taxon>Streptococcus</taxon>
    </lineage>
</organism>
<accession>A3CNT9</accession>
<sequence>MKRIPFLTAEEIALKQAQEAASDKPQKKTAEQIEAIYSSGRNILVSASAGSGKTFVMVQRIIDQILRGVAVSQLFISTFTVKAAGELKERLEKELGQALKEAESPELKQHLAQQLADLPNADIGTMDSFTQKVLSRYGYLLGLAPNFRILQSASEQLILQNEVFSQVFDHYYDSERQALFSRLVKNFTGKRKDLSAFREQVYRIYSFLQSTSSPQRWLEETFLYGYEHSDFAAERERIFCQIKSALWELETFFSAHLEHEGREFAGAKYQENVQDALTVLAGLNESSSIEETAQILKQIVALSQLSNGQAFTARVGKNADELKKEMAKDYNEARKPMIERLRSFDQQLYQLDFIEQHQDECLPLVELLRDFVADFAQAYLERKKAENAFEFGDISHFAIEILETFPEVRRFYQERYHEVMVDEYQDTNHTQERMLDLLSRGKNRFMVGDIKQSIYRFRQADPQIFSDKFKAYQEDSSQGKLIVLKENFRSHLEVLEATNDVFKRLMDEEVGEIDYNETHYLVAGNPAKREPNPANRASFLIYEGSKESPEEEADEGLPQAVSAGEVDLVIKEIIRLHNEEGVAFKDITLLTASRTRNDLILAAFEQHQIPLVPDDGAANYLQSVEVLVMLDTLRTINNPLNDYALTALLKSPMFDFGEDELARLSLQASQERSQENLYEKLVNALEGRGLNPALVTEELQKKLQHFYETLQSWRTYSKTHSLYDLIWKIYQDRFYYDMVGTLVNGAQRQANLYALSLRANEYEKSSFKGLSRFIGMIDRILENQHDLASVPVAAPKDAVRLMTIHKSKGLEFKYVFLLNMDKAFNRQDSSSAIILSRTKGVGIKYVADVSVSVKDSYAPNQLRISMDTLPYQQNLAELQLASLSEQMRLLYVAMTRAETKLYLVGKGSQEALDKRQWGKSQQGRLSASLRSQISNFQDWLYAIQDVFSDENLAYETRFVTDEELTAEEIGRINEPVLFPADDLADNRQSDDIRRALDILESVDRLNSQYRSAIELPSVRTPSQIKKFYEPIMDTDGLDIMDERAAFRPQPSFELPDFGKKAKVTGAQVGSAVHELMQRIPLDSSPSMAVLRSALAQVQADDAVKKQIQLSKIASFFETDLGRLLIENSDRVRREAPFAMLKRDEASGQEFVLRGILDGYLLFEDRIILFDYKTDKYKDSSELIARYRGQLDLYAQALSRSYGISQIEKYLILLGGEQLQVVKVD</sequence>
<reference key="1">
    <citation type="journal article" date="2007" name="J. Bacteriol.">
        <title>Genome of the opportunistic pathogen Streptococcus sanguinis.</title>
        <authorList>
            <person name="Xu P."/>
            <person name="Alves J.M."/>
            <person name="Kitten T."/>
            <person name="Brown A."/>
            <person name="Chen Z."/>
            <person name="Ozaki L.S."/>
            <person name="Manque P."/>
            <person name="Ge X."/>
            <person name="Serrano M.G."/>
            <person name="Puiu D."/>
            <person name="Hendricks S."/>
            <person name="Wang Y."/>
            <person name="Chaplin M.D."/>
            <person name="Akan D."/>
            <person name="Paik S."/>
            <person name="Peterson D.L."/>
            <person name="Macrina F.L."/>
            <person name="Buck G.A."/>
        </authorList>
    </citation>
    <scope>NUCLEOTIDE SEQUENCE [LARGE SCALE GENOMIC DNA]</scope>
    <source>
        <strain>SK36</strain>
    </source>
</reference>